<evidence type="ECO:0000255" key="1">
    <source>
        <dbReference type="HAMAP-Rule" id="MF_01393"/>
    </source>
</evidence>
<reference key="1">
    <citation type="submission" date="2007-02" db="EMBL/GenBank/DDBJ databases">
        <title>Complete sequence of chromosome of Shewanella baltica OS155.</title>
        <authorList>
            <consortium name="US DOE Joint Genome Institute"/>
            <person name="Copeland A."/>
            <person name="Lucas S."/>
            <person name="Lapidus A."/>
            <person name="Barry K."/>
            <person name="Detter J.C."/>
            <person name="Glavina del Rio T."/>
            <person name="Hammon N."/>
            <person name="Israni S."/>
            <person name="Dalin E."/>
            <person name="Tice H."/>
            <person name="Pitluck S."/>
            <person name="Sims D.R."/>
            <person name="Brettin T."/>
            <person name="Bruce D."/>
            <person name="Han C."/>
            <person name="Tapia R."/>
            <person name="Brainard J."/>
            <person name="Schmutz J."/>
            <person name="Larimer F."/>
            <person name="Land M."/>
            <person name="Hauser L."/>
            <person name="Kyrpides N."/>
            <person name="Mikhailova N."/>
            <person name="Brettar I."/>
            <person name="Klappenbach J."/>
            <person name="Konstantinidis K."/>
            <person name="Rodrigues J."/>
            <person name="Tiedje J."/>
            <person name="Richardson P."/>
        </authorList>
    </citation>
    <scope>NUCLEOTIDE SEQUENCE [LARGE SCALE GENOMIC DNA]</scope>
    <source>
        <strain>OS155 / ATCC BAA-1091</strain>
    </source>
</reference>
<protein>
    <recommendedName>
        <fullName evidence="1">ATP synthase subunit a</fullName>
    </recommendedName>
    <alternativeName>
        <fullName evidence="1">ATP synthase F0 sector subunit a</fullName>
    </alternativeName>
    <alternativeName>
        <fullName evidence="1">F-ATPase subunit 6</fullName>
    </alternativeName>
</protein>
<dbReference type="EMBL" id="CP000563">
    <property type="protein sequence ID" value="ABN63833.1"/>
    <property type="molecule type" value="Genomic_DNA"/>
</dbReference>
<dbReference type="RefSeq" id="WP_006083839.1">
    <property type="nucleotide sequence ID" value="NC_009052.1"/>
</dbReference>
<dbReference type="SMR" id="A3DAS0"/>
<dbReference type="STRING" id="325240.Sbal_4372"/>
<dbReference type="GeneID" id="11774466"/>
<dbReference type="KEGG" id="sbl:Sbal_4372"/>
<dbReference type="HOGENOM" id="CLU_041018_1_0_6"/>
<dbReference type="OrthoDB" id="9789241at2"/>
<dbReference type="Proteomes" id="UP000001557">
    <property type="component" value="Chromosome"/>
</dbReference>
<dbReference type="GO" id="GO:0005886">
    <property type="term" value="C:plasma membrane"/>
    <property type="evidence" value="ECO:0007669"/>
    <property type="project" value="UniProtKB-SubCell"/>
</dbReference>
<dbReference type="GO" id="GO:0045259">
    <property type="term" value="C:proton-transporting ATP synthase complex"/>
    <property type="evidence" value="ECO:0007669"/>
    <property type="project" value="UniProtKB-KW"/>
</dbReference>
<dbReference type="GO" id="GO:0046933">
    <property type="term" value="F:proton-transporting ATP synthase activity, rotational mechanism"/>
    <property type="evidence" value="ECO:0007669"/>
    <property type="project" value="UniProtKB-UniRule"/>
</dbReference>
<dbReference type="GO" id="GO:0042777">
    <property type="term" value="P:proton motive force-driven plasma membrane ATP synthesis"/>
    <property type="evidence" value="ECO:0007669"/>
    <property type="project" value="TreeGrafter"/>
</dbReference>
<dbReference type="CDD" id="cd00310">
    <property type="entry name" value="ATP-synt_Fo_a_6"/>
    <property type="match status" value="1"/>
</dbReference>
<dbReference type="FunFam" id="1.20.120.220:FF:000002">
    <property type="entry name" value="ATP synthase subunit a"/>
    <property type="match status" value="1"/>
</dbReference>
<dbReference type="Gene3D" id="1.20.120.220">
    <property type="entry name" value="ATP synthase, F0 complex, subunit A"/>
    <property type="match status" value="1"/>
</dbReference>
<dbReference type="HAMAP" id="MF_01393">
    <property type="entry name" value="ATP_synth_a_bact"/>
    <property type="match status" value="1"/>
</dbReference>
<dbReference type="InterPro" id="IPR045082">
    <property type="entry name" value="ATP_syn_F0_a_bact/chloroplast"/>
</dbReference>
<dbReference type="InterPro" id="IPR000568">
    <property type="entry name" value="ATP_synth_F0_asu"/>
</dbReference>
<dbReference type="InterPro" id="IPR023011">
    <property type="entry name" value="ATP_synth_F0_asu_AS"/>
</dbReference>
<dbReference type="InterPro" id="IPR035908">
    <property type="entry name" value="F0_ATP_A_sf"/>
</dbReference>
<dbReference type="NCBIfam" id="TIGR01131">
    <property type="entry name" value="ATP_synt_6_or_A"/>
    <property type="match status" value="1"/>
</dbReference>
<dbReference type="NCBIfam" id="NF004477">
    <property type="entry name" value="PRK05815.1-1"/>
    <property type="match status" value="1"/>
</dbReference>
<dbReference type="PANTHER" id="PTHR42823">
    <property type="entry name" value="ATP SYNTHASE SUBUNIT A, CHLOROPLASTIC"/>
    <property type="match status" value="1"/>
</dbReference>
<dbReference type="PANTHER" id="PTHR42823:SF3">
    <property type="entry name" value="ATP SYNTHASE SUBUNIT A, CHLOROPLASTIC"/>
    <property type="match status" value="1"/>
</dbReference>
<dbReference type="Pfam" id="PF00119">
    <property type="entry name" value="ATP-synt_A"/>
    <property type="match status" value="1"/>
</dbReference>
<dbReference type="PRINTS" id="PR00123">
    <property type="entry name" value="ATPASEA"/>
</dbReference>
<dbReference type="SUPFAM" id="SSF81336">
    <property type="entry name" value="F1F0 ATP synthase subunit A"/>
    <property type="match status" value="1"/>
</dbReference>
<dbReference type="PROSITE" id="PS00449">
    <property type="entry name" value="ATPASE_A"/>
    <property type="match status" value="1"/>
</dbReference>
<sequence length="264" mass="29422">MAATGEALTPQGYIQHHLTNLSVGEGFWTWHIDSLFFSVGLGVLFLWIFRSVGKKATSGVPGKLQCFVEMIVEFVNNSVKESFHGRNALIAPLALTIFVWVFMMNFMDMIPVDWLPHAASLMGIPYLKAVPTTDVNITFSLAIGVFLLIIFYSIKVKGVSGFVKELTLQPFNHKAMIPVNLLLETVTLIAKPISLALRLFGNLYAGELIFILIALMYGTNLLLSTLGVTLQLGWLIFHILVITLQAFIFMMLTIVYLSMAHEDH</sequence>
<comment type="function">
    <text evidence="1">Key component of the proton channel; it plays a direct role in the translocation of protons across the membrane.</text>
</comment>
<comment type="subunit">
    <text evidence="1">F-type ATPases have 2 components, CF(1) - the catalytic core - and CF(0) - the membrane proton channel. CF(1) has five subunits: alpha(3), beta(3), gamma(1), delta(1), epsilon(1). CF(0) has three main subunits: a(1), b(2) and c(9-12). The alpha and beta chains form an alternating ring which encloses part of the gamma chain. CF(1) is attached to CF(0) by a central stalk formed by the gamma and epsilon chains, while a peripheral stalk is formed by the delta and b chains.</text>
</comment>
<comment type="subcellular location">
    <subcellularLocation>
        <location evidence="1">Cell inner membrane</location>
        <topology evidence="1">Multi-pass membrane protein</topology>
    </subcellularLocation>
</comment>
<comment type="similarity">
    <text evidence="1">Belongs to the ATPase A chain family.</text>
</comment>
<feature type="chain" id="PRO_0000362448" description="ATP synthase subunit a">
    <location>
        <begin position="1"/>
        <end position="264"/>
    </location>
</feature>
<feature type="transmembrane region" description="Helical" evidence="1">
    <location>
        <begin position="29"/>
        <end position="49"/>
    </location>
</feature>
<feature type="transmembrane region" description="Helical" evidence="1">
    <location>
        <begin position="90"/>
        <end position="110"/>
    </location>
</feature>
<feature type="transmembrane region" description="Helical" evidence="1">
    <location>
        <begin position="134"/>
        <end position="154"/>
    </location>
</feature>
<feature type="transmembrane region" description="Helical" evidence="1">
    <location>
        <begin position="177"/>
        <end position="197"/>
    </location>
</feature>
<feature type="transmembrane region" description="Helical" evidence="1">
    <location>
        <begin position="208"/>
        <end position="228"/>
    </location>
</feature>
<feature type="transmembrane region" description="Helical" evidence="1">
    <location>
        <begin position="235"/>
        <end position="255"/>
    </location>
</feature>
<organism>
    <name type="scientific">Shewanella baltica (strain OS155 / ATCC BAA-1091)</name>
    <dbReference type="NCBI Taxonomy" id="325240"/>
    <lineage>
        <taxon>Bacteria</taxon>
        <taxon>Pseudomonadati</taxon>
        <taxon>Pseudomonadota</taxon>
        <taxon>Gammaproteobacteria</taxon>
        <taxon>Alteromonadales</taxon>
        <taxon>Shewanellaceae</taxon>
        <taxon>Shewanella</taxon>
    </lineage>
</organism>
<gene>
    <name evidence="1" type="primary">atpB</name>
    <name type="ordered locus">Sbal_4372</name>
</gene>
<keyword id="KW-0066">ATP synthesis</keyword>
<keyword id="KW-0997">Cell inner membrane</keyword>
<keyword id="KW-1003">Cell membrane</keyword>
<keyword id="KW-0138">CF(0)</keyword>
<keyword id="KW-0375">Hydrogen ion transport</keyword>
<keyword id="KW-0406">Ion transport</keyword>
<keyword id="KW-0472">Membrane</keyword>
<keyword id="KW-1185">Reference proteome</keyword>
<keyword id="KW-0812">Transmembrane</keyword>
<keyword id="KW-1133">Transmembrane helix</keyword>
<keyword id="KW-0813">Transport</keyword>
<accession>A3DAS0</accession>
<proteinExistence type="inferred from homology"/>
<name>ATP6_SHEB5</name>